<dbReference type="EMBL" id="L18867">
    <property type="protein sequence ID" value="AAA16116.1"/>
    <property type="molecule type" value="Unassigned_DNA"/>
</dbReference>
<dbReference type="EMBL" id="Z23278">
    <property type="protein sequence ID" value="CAA80816.1"/>
    <property type="molecule type" value="Genomic_DNA"/>
</dbReference>
<dbReference type="EMBL" id="U82664">
    <property type="protein sequence ID" value="AAB40194.1"/>
    <property type="molecule type" value="Genomic_DNA"/>
</dbReference>
<dbReference type="EMBL" id="U00096">
    <property type="protein sequence ID" value="AAC73541.1"/>
    <property type="molecule type" value="Genomic_DNA"/>
</dbReference>
<dbReference type="EMBL" id="AP009048">
    <property type="protein sequence ID" value="BAE76218.1"/>
    <property type="molecule type" value="Genomic_DNA"/>
</dbReference>
<dbReference type="PIR" id="A48709">
    <property type="entry name" value="A48709"/>
</dbReference>
<dbReference type="RefSeq" id="NP_414972.1">
    <property type="nucleotide sequence ID" value="NC_000913.3"/>
</dbReference>
<dbReference type="RefSeq" id="WP_000130305.1">
    <property type="nucleotide sequence ID" value="NZ_STEB01000007.1"/>
</dbReference>
<dbReference type="PDB" id="1OVX">
    <property type="method" value="NMR"/>
    <property type="chains" value="A/B=2-61"/>
</dbReference>
<dbReference type="PDB" id="2DS5">
    <property type="method" value="X-ray"/>
    <property type="resolution" value="1.50 A"/>
    <property type="chains" value="A/B=2-52"/>
</dbReference>
<dbReference type="PDB" id="2DS6">
    <property type="method" value="X-ray"/>
    <property type="resolution" value="2.00 A"/>
    <property type="chains" value="A/B=2-52"/>
</dbReference>
<dbReference type="PDB" id="2DS7">
    <property type="method" value="X-ray"/>
    <property type="resolution" value="2.50 A"/>
    <property type="chains" value="A=2-52"/>
</dbReference>
<dbReference type="PDB" id="2DS8">
    <property type="method" value="X-ray"/>
    <property type="resolution" value="1.60 A"/>
    <property type="chains" value="A/B=2-52"/>
</dbReference>
<dbReference type="PDB" id="3HTE">
    <property type="method" value="X-ray"/>
    <property type="resolution" value="4.03 A"/>
    <property type="chains" value="A/B/C/D/E/F=62-424"/>
</dbReference>
<dbReference type="PDB" id="3HWS">
    <property type="method" value="X-ray"/>
    <property type="resolution" value="3.25 A"/>
    <property type="chains" value="A/B/C/D/E/F=62-424"/>
</dbReference>
<dbReference type="PDB" id="4I34">
    <property type="method" value="X-ray"/>
    <property type="resolution" value="4.12 A"/>
    <property type="chains" value="A/B/C/D/E/F=62-424"/>
</dbReference>
<dbReference type="PDB" id="4I4L">
    <property type="method" value="X-ray"/>
    <property type="resolution" value="3.70 A"/>
    <property type="chains" value="A/B/C/D/E/F=62-424"/>
</dbReference>
<dbReference type="PDB" id="4I5O">
    <property type="method" value="X-ray"/>
    <property type="resolution" value="4.48 A"/>
    <property type="chains" value="A/B/C/D/E/F=62-424"/>
</dbReference>
<dbReference type="PDB" id="4I63">
    <property type="method" value="X-ray"/>
    <property type="resolution" value="5.71 A"/>
    <property type="chains" value="A/B/C/D/E/F=62-424"/>
</dbReference>
<dbReference type="PDB" id="4I81">
    <property type="method" value="X-ray"/>
    <property type="resolution" value="3.82 A"/>
    <property type="chains" value="A/B/C/D/E/F=62-424"/>
</dbReference>
<dbReference type="PDB" id="4I9K">
    <property type="method" value="X-ray"/>
    <property type="resolution" value="5.00 A"/>
    <property type="chains" value="A/B=62-424"/>
</dbReference>
<dbReference type="PDB" id="6PO1">
    <property type="method" value="EM"/>
    <property type="resolution" value="4.20 A"/>
    <property type="chains" value="A/B/C/D/E/F=62-424"/>
</dbReference>
<dbReference type="PDB" id="6PO3">
    <property type="method" value="EM"/>
    <property type="resolution" value="4.28 A"/>
    <property type="chains" value="A/B/C/D/E/F=62-424"/>
</dbReference>
<dbReference type="PDB" id="6POD">
    <property type="method" value="EM"/>
    <property type="resolution" value="4.05 A"/>
    <property type="chains" value="A/B/C/D/E/F=62-424"/>
</dbReference>
<dbReference type="PDB" id="6POS">
    <property type="method" value="EM"/>
    <property type="resolution" value="4.12 A"/>
    <property type="chains" value="A/B/C/D/E/F=62-424"/>
</dbReference>
<dbReference type="PDB" id="6PP5">
    <property type="method" value="EM"/>
    <property type="resolution" value="3.98 A"/>
    <property type="chains" value="A/B/C/D/E/F=62-424"/>
</dbReference>
<dbReference type="PDB" id="6PP6">
    <property type="method" value="EM"/>
    <property type="resolution" value="4.28 A"/>
    <property type="chains" value="A/B/C/D/E/F=62-424"/>
</dbReference>
<dbReference type="PDB" id="6PP7">
    <property type="method" value="EM"/>
    <property type="resolution" value="4.05 A"/>
    <property type="chains" value="A/B/C/D/E/F=62-424"/>
</dbReference>
<dbReference type="PDB" id="6PP8">
    <property type="method" value="EM"/>
    <property type="resolution" value="4.12 A"/>
    <property type="chains" value="A/B/C/D/E/F=62-424"/>
</dbReference>
<dbReference type="PDB" id="6PPE">
    <property type="method" value="EM"/>
    <property type="resolution" value="3.19 A"/>
    <property type="chains" value="1/2/3/O/P/Q/R/S/T/U/V/X/Y/Z=62-424"/>
</dbReference>
<dbReference type="PDB" id="6WR2">
    <property type="method" value="EM"/>
    <property type="resolution" value="2.88 A"/>
    <property type="chains" value="A/B/C/D/E/F=62-424"/>
</dbReference>
<dbReference type="PDB" id="6WRF">
    <property type="method" value="EM"/>
    <property type="resolution" value="3.14 A"/>
    <property type="chains" value="A/B/C/D/E/F=62-424"/>
</dbReference>
<dbReference type="PDB" id="6WSG">
    <property type="method" value="EM"/>
    <property type="resolution" value="3.16 A"/>
    <property type="chains" value="A/B/C/D/E/F=62-424"/>
</dbReference>
<dbReference type="PDB" id="8E7V">
    <property type="method" value="EM"/>
    <property type="resolution" value="3.10 A"/>
    <property type="chains" value="A/B/C/D/E/F=62-424"/>
</dbReference>
<dbReference type="PDB" id="8E8Q">
    <property type="method" value="EM"/>
    <property type="resolution" value="3.12 A"/>
    <property type="chains" value="A/B/C/D/E/F=62-424"/>
</dbReference>
<dbReference type="PDB" id="8E91">
    <property type="method" value="EM"/>
    <property type="resolution" value="2.57 A"/>
    <property type="chains" value="A/B/C/D/E/F=1-424"/>
</dbReference>
<dbReference type="PDB" id="8ET3">
    <property type="method" value="EM"/>
    <property type="resolution" value="3.70 A"/>
    <property type="chains" value="A/B/C/D/E/F=1-424"/>
</dbReference>
<dbReference type="PDB" id="8V9R">
    <property type="method" value="EM"/>
    <property type="resolution" value="2.80 A"/>
    <property type="chains" value="A/B/C/D/E/F=62-424"/>
</dbReference>
<dbReference type="PDB" id="9C87">
    <property type="method" value="EM"/>
    <property type="resolution" value="3.70 A"/>
    <property type="chains" value="A/B/C/D/E/F=62-424"/>
</dbReference>
<dbReference type="PDB" id="9C88">
    <property type="method" value="EM"/>
    <property type="resolution" value="2.60 A"/>
    <property type="chains" value="A/B/C/D/E/F=62-424"/>
</dbReference>
<dbReference type="PDBsum" id="1OVX"/>
<dbReference type="PDBsum" id="2DS5"/>
<dbReference type="PDBsum" id="2DS6"/>
<dbReference type="PDBsum" id="2DS7"/>
<dbReference type="PDBsum" id="2DS8"/>
<dbReference type="PDBsum" id="3HTE"/>
<dbReference type="PDBsum" id="3HWS"/>
<dbReference type="PDBsum" id="4I34"/>
<dbReference type="PDBsum" id="4I4L"/>
<dbReference type="PDBsum" id="4I5O"/>
<dbReference type="PDBsum" id="4I63"/>
<dbReference type="PDBsum" id="4I81"/>
<dbReference type="PDBsum" id="4I9K"/>
<dbReference type="PDBsum" id="6PO1"/>
<dbReference type="PDBsum" id="6PO3"/>
<dbReference type="PDBsum" id="6POD"/>
<dbReference type="PDBsum" id="6POS"/>
<dbReference type="PDBsum" id="6PP5"/>
<dbReference type="PDBsum" id="6PP6"/>
<dbReference type="PDBsum" id="6PP7"/>
<dbReference type="PDBsum" id="6PP8"/>
<dbReference type="PDBsum" id="6PPE"/>
<dbReference type="PDBsum" id="6WR2"/>
<dbReference type="PDBsum" id="6WRF"/>
<dbReference type="PDBsum" id="6WSG"/>
<dbReference type="PDBsum" id="8E7V"/>
<dbReference type="PDBsum" id="8E8Q"/>
<dbReference type="PDBsum" id="8E91"/>
<dbReference type="PDBsum" id="8ET3"/>
<dbReference type="PDBsum" id="8V9R"/>
<dbReference type="PDBsum" id="9C87"/>
<dbReference type="PDBsum" id="9C88"/>
<dbReference type="EMDB" id="EMD-21875"/>
<dbReference type="EMDB" id="EMD-21882"/>
<dbReference type="EMDB" id="EMD-21892"/>
<dbReference type="EMDB" id="EMD-27941"/>
<dbReference type="EMDB" id="EMD-27946"/>
<dbReference type="EMDB" id="EMD-43081"/>
<dbReference type="EMDB" id="EMD-45299"/>
<dbReference type="EMDB" id="EMD-45300"/>
<dbReference type="SMR" id="P0A6H1"/>
<dbReference type="BioGRID" id="4260735">
    <property type="interactions" value="576"/>
</dbReference>
<dbReference type="BioGRID" id="849472">
    <property type="interactions" value="1"/>
</dbReference>
<dbReference type="ComplexPortal" id="CPX-3176">
    <property type="entry name" value="Endopeptidase ClpXP complex"/>
</dbReference>
<dbReference type="DIP" id="DIP-35907N"/>
<dbReference type="FunCoup" id="P0A6H1">
    <property type="interactions" value="659"/>
</dbReference>
<dbReference type="IntAct" id="P0A6H1">
    <property type="interactions" value="35"/>
</dbReference>
<dbReference type="STRING" id="511145.b0438"/>
<dbReference type="MEROPS" id="X20.004"/>
<dbReference type="jPOST" id="P0A6H1"/>
<dbReference type="PaxDb" id="511145-b0438"/>
<dbReference type="EnsemblBacteria" id="AAC73541">
    <property type="protein sequence ID" value="AAC73541"/>
    <property type="gene ID" value="b0438"/>
</dbReference>
<dbReference type="GeneID" id="93777016"/>
<dbReference type="GeneID" id="945083"/>
<dbReference type="KEGG" id="ecj:JW0428"/>
<dbReference type="KEGG" id="eco:b0438"/>
<dbReference type="KEGG" id="ecoc:C3026_02145"/>
<dbReference type="PATRIC" id="fig|1411691.4.peg.1838"/>
<dbReference type="EchoBASE" id="EB0157"/>
<dbReference type="eggNOG" id="COG1219">
    <property type="taxonomic scope" value="Bacteria"/>
</dbReference>
<dbReference type="HOGENOM" id="CLU_014218_8_2_6"/>
<dbReference type="InParanoid" id="P0A6H1"/>
<dbReference type="OMA" id="LDTMFDL"/>
<dbReference type="OrthoDB" id="9804062at2"/>
<dbReference type="PhylomeDB" id="P0A6H1"/>
<dbReference type="BioCyc" id="EcoCyc:EG10159-MONOMER"/>
<dbReference type="BioCyc" id="MetaCyc:EG10159-MONOMER"/>
<dbReference type="BRENDA" id="3.4.21.92">
    <property type="organism ID" value="2026"/>
</dbReference>
<dbReference type="EvolutionaryTrace" id="P0A6H1"/>
<dbReference type="PRO" id="PR:P0A6H1"/>
<dbReference type="Proteomes" id="UP000000625">
    <property type="component" value="Chromosome"/>
</dbReference>
<dbReference type="GO" id="GO:0005829">
    <property type="term" value="C:cytosol"/>
    <property type="evidence" value="ECO:0000314"/>
    <property type="project" value="EcoCyc"/>
</dbReference>
<dbReference type="GO" id="GO:0009368">
    <property type="term" value="C:endopeptidase Clp complex"/>
    <property type="evidence" value="ECO:0000353"/>
    <property type="project" value="ComplexPortal"/>
</dbReference>
<dbReference type="GO" id="GO:0009376">
    <property type="term" value="C:HslUV protease complex"/>
    <property type="evidence" value="ECO:0000314"/>
    <property type="project" value="CAFA"/>
</dbReference>
<dbReference type="GO" id="GO:0005524">
    <property type="term" value="F:ATP binding"/>
    <property type="evidence" value="ECO:0000314"/>
    <property type="project" value="CAFA"/>
</dbReference>
<dbReference type="GO" id="GO:0016887">
    <property type="term" value="F:ATP hydrolysis activity"/>
    <property type="evidence" value="ECO:0000314"/>
    <property type="project" value="CACAO"/>
</dbReference>
<dbReference type="GO" id="GO:0004176">
    <property type="term" value="F:ATP-dependent peptidase activity"/>
    <property type="evidence" value="ECO:0000314"/>
    <property type="project" value="CAFA"/>
</dbReference>
<dbReference type="GO" id="GO:0140662">
    <property type="term" value="F:ATP-dependent protein folding chaperone"/>
    <property type="evidence" value="ECO:0007669"/>
    <property type="project" value="InterPro"/>
</dbReference>
<dbReference type="GO" id="GO:0097718">
    <property type="term" value="F:disordered domain specific binding"/>
    <property type="evidence" value="ECO:0000353"/>
    <property type="project" value="CAFA"/>
</dbReference>
<dbReference type="GO" id="GO:0042802">
    <property type="term" value="F:identical protein binding"/>
    <property type="evidence" value="ECO:0000353"/>
    <property type="project" value="IntAct"/>
</dbReference>
<dbReference type="GO" id="GO:0002020">
    <property type="term" value="F:protease binding"/>
    <property type="evidence" value="ECO:0000353"/>
    <property type="project" value="CAFA"/>
</dbReference>
<dbReference type="GO" id="GO:0046983">
    <property type="term" value="F:protein dimerization activity"/>
    <property type="evidence" value="ECO:0007669"/>
    <property type="project" value="InterPro"/>
</dbReference>
<dbReference type="GO" id="GO:0051082">
    <property type="term" value="F:unfolded protein binding"/>
    <property type="evidence" value="ECO:0007669"/>
    <property type="project" value="UniProtKB-UniRule"/>
</dbReference>
<dbReference type="GO" id="GO:0008270">
    <property type="term" value="F:zinc ion binding"/>
    <property type="evidence" value="ECO:0007669"/>
    <property type="project" value="InterPro"/>
</dbReference>
<dbReference type="GO" id="GO:0051301">
    <property type="term" value="P:cell division"/>
    <property type="evidence" value="ECO:0000316"/>
    <property type="project" value="CACAO"/>
</dbReference>
<dbReference type="GO" id="GO:0030164">
    <property type="term" value="P:protein denaturation"/>
    <property type="evidence" value="ECO:0000314"/>
    <property type="project" value="CAFA"/>
</dbReference>
<dbReference type="GO" id="GO:0043335">
    <property type="term" value="P:protein unfolding"/>
    <property type="evidence" value="ECO:0000314"/>
    <property type="project" value="CACAO"/>
</dbReference>
<dbReference type="GO" id="GO:0051603">
    <property type="term" value="P:proteolysis involved in protein catabolic process"/>
    <property type="evidence" value="ECO:0000318"/>
    <property type="project" value="GO_Central"/>
</dbReference>
<dbReference type="CDD" id="cd19497">
    <property type="entry name" value="RecA-like_ClpX"/>
    <property type="match status" value="1"/>
</dbReference>
<dbReference type="FunFam" id="1.10.8.60:FF:000002">
    <property type="entry name" value="ATP-dependent Clp protease ATP-binding subunit ClpX"/>
    <property type="match status" value="1"/>
</dbReference>
<dbReference type="FunFam" id="3.40.50.300:FF:000005">
    <property type="entry name" value="ATP-dependent Clp protease ATP-binding subunit ClpX"/>
    <property type="match status" value="1"/>
</dbReference>
<dbReference type="Gene3D" id="1.10.8.60">
    <property type="match status" value="1"/>
</dbReference>
<dbReference type="Gene3D" id="6.20.220.10">
    <property type="entry name" value="ClpX chaperone, C4-type zinc finger domain"/>
    <property type="match status" value="1"/>
</dbReference>
<dbReference type="Gene3D" id="3.40.50.300">
    <property type="entry name" value="P-loop containing nucleotide triphosphate hydrolases"/>
    <property type="match status" value="1"/>
</dbReference>
<dbReference type="HAMAP" id="MF_00175">
    <property type="entry name" value="ClpX"/>
    <property type="match status" value="1"/>
</dbReference>
<dbReference type="InterPro" id="IPR003593">
    <property type="entry name" value="AAA+_ATPase"/>
</dbReference>
<dbReference type="InterPro" id="IPR050052">
    <property type="entry name" value="ATP-dep_Clp_protease_ClpX"/>
</dbReference>
<dbReference type="InterPro" id="IPR003959">
    <property type="entry name" value="ATPase_AAA_core"/>
</dbReference>
<dbReference type="InterPro" id="IPR019489">
    <property type="entry name" value="Clp_ATPase_C"/>
</dbReference>
<dbReference type="InterPro" id="IPR004487">
    <property type="entry name" value="Clp_protease_ATP-bd_su_ClpX"/>
</dbReference>
<dbReference type="InterPro" id="IPR046425">
    <property type="entry name" value="ClpX_bact"/>
</dbReference>
<dbReference type="InterPro" id="IPR027417">
    <property type="entry name" value="P-loop_NTPase"/>
</dbReference>
<dbReference type="InterPro" id="IPR010603">
    <property type="entry name" value="Znf_CppX_C4"/>
</dbReference>
<dbReference type="InterPro" id="IPR038366">
    <property type="entry name" value="Znf_CppX_C4_sf"/>
</dbReference>
<dbReference type="NCBIfam" id="TIGR00382">
    <property type="entry name" value="clpX"/>
    <property type="match status" value="1"/>
</dbReference>
<dbReference type="NCBIfam" id="NF003745">
    <property type="entry name" value="PRK05342.1"/>
    <property type="match status" value="1"/>
</dbReference>
<dbReference type="PANTHER" id="PTHR48102:SF7">
    <property type="entry name" value="ATP-DEPENDENT CLP PROTEASE ATP-BINDING SUBUNIT CLPX-LIKE, MITOCHONDRIAL"/>
    <property type="match status" value="1"/>
</dbReference>
<dbReference type="PANTHER" id="PTHR48102">
    <property type="entry name" value="ATP-DEPENDENT CLP PROTEASE ATP-BINDING SUBUNIT CLPX-LIKE, MITOCHONDRIAL-RELATED"/>
    <property type="match status" value="1"/>
</dbReference>
<dbReference type="Pfam" id="PF07724">
    <property type="entry name" value="AAA_2"/>
    <property type="match status" value="1"/>
</dbReference>
<dbReference type="Pfam" id="PF10431">
    <property type="entry name" value="ClpB_D2-small"/>
    <property type="match status" value="1"/>
</dbReference>
<dbReference type="Pfam" id="PF06689">
    <property type="entry name" value="zf-C4_ClpX"/>
    <property type="match status" value="1"/>
</dbReference>
<dbReference type="SMART" id="SM00382">
    <property type="entry name" value="AAA"/>
    <property type="match status" value="1"/>
</dbReference>
<dbReference type="SMART" id="SM01086">
    <property type="entry name" value="ClpB_D2-small"/>
    <property type="match status" value="1"/>
</dbReference>
<dbReference type="SMART" id="SM00994">
    <property type="entry name" value="zf-C4_ClpX"/>
    <property type="match status" value="1"/>
</dbReference>
<dbReference type="SUPFAM" id="SSF57716">
    <property type="entry name" value="Glucocorticoid receptor-like (DNA-binding domain)"/>
    <property type="match status" value="1"/>
</dbReference>
<dbReference type="SUPFAM" id="SSF52540">
    <property type="entry name" value="P-loop containing nucleoside triphosphate hydrolases"/>
    <property type="match status" value="1"/>
</dbReference>
<dbReference type="PROSITE" id="PS51902">
    <property type="entry name" value="CLPX_ZB"/>
    <property type="match status" value="1"/>
</dbReference>
<name>CLPX_ECOLI</name>
<reference key="1">
    <citation type="journal article" date="1993" name="J. Biol. Chem.">
        <title>ClpX, an alternative subunit for the ATP-dependent Clp protease of Escherichia coli. Sequence and in vivo activities.</title>
        <authorList>
            <person name="Gottesman S."/>
            <person name="Clark W.P."/>
            <person name="de Crecy-Lagard V."/>
            <person name="Maurizi M.R."/>
        </authorList>
    </citation>
    <scope>NUCLEOTIDE SEQUENCE [GENOMIC DNA]</scope>
    <source>
        <strain>K12</strain>
    </source>
</reference>
<reference key="2">
    <citation type="journal article" date="1994" name="Biochem. Biophys. Res. Commun.">
        <title>clpX encoding an alternative ATP-binding subunit of protease Ti (Clp) can be expressed independently from clpP in Escherichia coli.</title>
        <authorList>
            <person name="Yoo S.J."/>
            <person name="Seol J.H."/>
            <person name="Kang M.S."/>
            <person name="Ha D.B."/>
            <person name="Chung C.H."/>
        </authorList>
    </citation>
    <scope>NUCLEOTIDE SEQUENCE [GENOMIC DNA]</scope>
    <scope>INDUCTION</scope>
    <scope>OPERON</scope>
    <scope>ATP-BINDING</scope>
</reference>
<reference key="3">
    <citation type="submission" date="1997-01" db="EMBL/GenBank/DDBJ databases">
        <title>Sequence of minutes 4-25 of Escherichia coli.</title>
        <authorList>
            <person name="Chung E."/>
            <person name="Allen E."/>
            <person name="Araujo R."/>
            <person name="Aparicio A.M."/>
            <person name="Davis K."/>
            <person name="Duncan M."/>
            <person name="Federspiel N."/>
            <person name="Hyman R."/>
            <person name="Kalman S."/>
            <person name="Komp C."/>
            <person name="Kurdi O."/>
            <person name="Lew H."/>
            <person name="Lin D."/>
            <person name="Namath A."/>
            <person name="Oefner P."/>
            <person name="Roberts D."/>
            <person name="Schramm S."/>
            <person name="Davis R.W."/>
        </authorList>
    </citation>
    <scope>NUCLEOTIDE SEQUENCE [LARGE SCALE GENOMIC DNA]</scope>
    <source>
        <strain>K12 / MG1655 / ATCC 47076</strain>
    </source>
</reference>
<reference key="4">
    <citation type="journal article" date="1997" name="Science">
        <title>The complete genome sequence of Escherichia coli K-12.</title>
        <authorList>
            <person name="Blattner F.R."/>
            <person name="Plunkett G. III"/>
            <person name="Bloch C.A."/>
            <person name="Perna N.T."/>
            <person name="Burland V."/>
            <person name="Riley M."/>
            <person name="Collado-Vides J."/>
            <person name="Glasner J.D."/>
            <person name="Rode C.K."/>
            <person name="Mayhew G.F."/>
            <person name="Gregor J."/>
            <person name="Davis N.W."/>
            <person name="Kirkpatrick H.A."/>
            <person name="Goeden M.A."/>
            <person name="Rose D.J."/>
            <person name="Mau B."/>
            <person name="Shao Y."/>
        </authorList>
    </citation>
    <scope>NUCLEOTIDE SEQUENCE [LARGE SCALE GENOMIC DNA]</scope>
    <source>
        <strain>K12 / MG1655 / ATCC 47076</strain>
    </source>
</reference>
<reference key="5">
    <citation type="journal article" date="2006" name="Mol. Syst. Biol.">
        <title>Highly accurate genome sequences of Escherichia coli K-12 strains MG1655 and W3110.</title>
        <authorList>
            <person name="Hayashi K."/>
            <person name="Morooka N."/>
            <person name="Yamamoto Y."/>
            <person name="Fujita K."/>
            <person name="Isono K."/>
            <person name="Choi S."/>
            <person name="Ohtsubo E."/>
            <person name="Baba T."/>
            <person name="Wanner B.L."/>
            <person name="Mori H."/>
            <person name="Horiuchi T."/>
        </authorList>
    </citation>
    <scope>NUCLEOTIDE SEQUENCE [LARGE SCALE GENOMIC DNA]</scope>
    <source>
        <strain>K12 / W3110 / ATCC 27325 / DSM 5911</strain>
    </source>
</reference>
<reference key="6">
    <citation type="journal article" date="1993" name="J. Biol. Chem.">
        <title>Isolation and characterization of ClpX, a new ATP-dependent specificity component of the Clp protease of Escherichia coli.</title>
        <authorList>
            <person name="Wojtkowiak D."/>
            <person name="Georgopoulos C."/>
            <person name="Zylicz M."/>
        </authorList>
    </citation>
    <scope>PROTEIN SEQUENCE OF 2-25</scope>
    <scope>CHARACTERIZATION</scope>
    <source>
        <strain>K12 / W3110 / ATCC 27325 / DSM 5911</strain>
    </source>
</reference>
<reference key="7">
    <citation type="journal article" date="1995" name="EMBO J.">
        <title>The ClpX heat-shock protein of Escherichia coli, the ATP-dependent substrate specificity component of the ClpP-ClpX protease, is a novel molecular chaperone.</title>
        <authorList>
            <person name="Wawrzynow A."/>
            <person name="Wojtkowiak D."/>
            <person name="Marszalek J."/>
            <person name="Banecki B."/>
            <person name="Jonsen M."/>
            <person name="Graves B."/>
            <person name="Georgopoulos C."/>
            <person name="Zylicz M."/>
        </authorList>
    </citation>
    <scope>CHARACTERIZATION</scope>
</reference>
<reference key="8">
    <citation type="journal article" date="2003" name="Cell">
        <title>Linkage between ATP consumption and mechanical unfolding during the protein processing reactions of an AAA+ degradation machine.</title>
        <authorList>
            <person name="Kenniston J.A."/>
            <person name="Baker T.A."/>
            <person name="Fernandez J.M."/>
            <person name="Sauer R.T."/>
        </authorList>
    </citation>
    <scope>FUNCTION</scope>
</reference>
<reference key="9">
    <citation type="journal article" date="2004" name="Genes Dev.">
        <title>Modulating substrate choice: the SspB adaptor delivers a regulator of the extracytoplasmic-stress response to the AAA+ protease ClpXP for degradation.</title>
        <authorList>
            <person name="Flynn J.M."/>
            <person name="Levchenko I."/>
            <person name="Sauer R.T."/>
            <person name="Baker T.A."/>
        </authorList>
    </citation>
    <scope>FUNCTION</scope>
    <scope>SUBSTRATE</scope>
    <scope>DISRUPTION PHENOTYPE</scope>
</reference>
<reference key="10">
    <citation type="journal article" date="2007" name="Genes Dev.">
        <title>Design principles of the proteolytic cascade governing the sigmaE-mediated envelope stress response in Escherichia coli: keys to graded, buffered, and rapid signal transduction.</title>
        <authorList>
            <person name="Chaba R."/>
            <person name="Grigorova I.L."/>
            <person name="Flynn J.M."/>
            <person name="Baker T.A."/>
            <person name="Gross C.A."/>
        </authorList>
    </citation>
    <scope>DISRUPTION PHENOTYPE</scope>
</reference>
<reference key="11">
    <citation type="journal article" date="2008" name="Mol. Cell">
        <title>Unique contacts direct high-priority recognition of the tetrameric Mu transposase-DNA complex by the AAA+ unfoldase ClpX.</title>
        <authorList>
            <person name="Abdelhakim A.H."/>
            <person name="Oakes E.C."/>
            <person name="Sauer R.T."/>
            <person name="Baker T.A."/>
        </authorList>
    </citation>
    <scope>INTERACTION WITH MU DDE-RECOMBINASE A</scope>
</reference>
<reference key="12">
    <citation type="journal article" date="2003" name="J. Biol. Chem.">
        <title>Solution structure of the dimeric zinc binding domain of the chaperone ClpX.</title>
        <authorList>
            <person name="Donaldson L.W."/>
            <person name="Wojtyra U."/>
            <person name="Houry W.A."/>
        </authorList>
    </citation>
    <scope>STRUCTURE BY NMR OF 2-61 IN COMPLEX WITH ZINC</scope>
</reference>
<reference key="13">
    <citation type="journal article" date="2007" name="J. Mol. Biol.">
        <title>Structural basis of SspB-tail recognition by the zinc binding domain of ClpX.</title>
        <authorList>
            <person name="Park E.Y."/>
            <person name="Lee B.G."/>
            <person name="Hong S.B."/>
            <person name="Kim H.W."/>
            <person name="Jeon H."/>
            <person name="Song H.K."/>
        </authorList>
    </citation>
    <scope>X-RAY CRYSTALLOGRAPHY (1.50 ANGSTROMS) OF 2-52 IN COMPLEX WITH ZINC AND IN COMPLEX WITH SSPB</scope>
    <scope>SUBUNIT</scope>
</reference>
<reference key="14">
    <citation type="journal article" date="2009" name="Cell">
        <title>Structures of asymmetric ClpX hexamers reveal nucleotide-dependent motions in a AAA+ protein-unfolding machine.</title>
        <authorList>
            <person name="Glynn S.E."/>
            <person name="Martin A."/>
            <person name="Nager A.R."/>
            <person name="Baker T.A."/>
            <person name="Sauer R.T."/>
        </authorList>
    </citation>
    <scope>X-RAY CRYSTALLOGRAPHY (3.25 ANGSTROMS) OF 62-424 IN COMPLEX WITH ATP</scope>
    <scope>SUBUNIT</scope>
</reference>
<reference key="15">
    <citation type="journal article" date="2013" name="Cell">
        <title>Nucleotide binding and conformational switching in the hexameric ring of a AAA+ machine.</title>
        <authorList>
            <person name="Stinson B.M."/>
            <person name="Nager A.R."/>
            <person name="Glynn S.E."/>
            <person name="Schmitz K.R."/>
            <person name="Baker T.A."/>
            <person name="Sauer R.T."/>
        </authorList>
    </citation>
    <scope>X-RAY CRYSTALLOGRAPHY (3.70 ANGSTROMS) OF 62-424 IN COMPLEX WITH ATP</scope>
    <scope>MUTAGENESIS OF GLU-185 AND ARG-370</scope>
</reference>
<sequence>MTDKRKDGSGKLLYCSFCGKSQHEVRKLIAGPSVYICDECVDLCNDIIREEIKEVAPHRERSALPTPHEIRNHLDDYVIGQEQAKKVLAVAVYNHYKRLRNGDTSNGVELGKSNILLIGPTGSGKTLLAETLARLLDVPFTMADATTLTEAGYVGEDVENIIQKLLQKCDYDVQKAQRGIVYIDEIDKISRKSDNPSITRDVSGEGVQQALLKLIEGTVAAVPPQGGRKHPQQEFLQVDTSKILFICGGAFAGLDKVISHRVETGSGIGFGATVKAKSDKASEGELLAQVEPEDLIKFGLIPEFIGRLPVVATLNELSEEALIQILKEPKNALTKQYQALFNLEGVDLEFRDEALDAIAKKAMARKTGARGLRSIVEAALLDTMYDLPSMEDVEKVVIDESVIDGQSKPLLIYGKPEAQQASGE</sequence>
<proteinExistence type="evidence at protein level"/>
<feature type="initiator methionine" description="Removed" evidence="12">
    <location>
        <position position="1"/>
    </location>
</feature>
<feature type="chain" id="PRO_0000160352" description="ATP-dependent Clp protease ATP-binding subunit ClpX">
    <location>
        <begin position="2"/>
        <end position="424"/>
    </location>
</feature>
<feature type="domain" description="ClpX-type ZB" evidence="2">
    <location>
        <begin position="2"/>
        <end position="56"/>
    </location>
</feature>
<feature type="binding site" evidence="2 4">
    <location>
        <position position="15"/>
    </location>
    <ligand>
        <name>Zn(2+)</name>
        <dbReference type="ChEBI" id="CHEBI:29105"/>
    </ligand>
</feature>
<feature type="binding site" evidence="2 4">
    <location>
        <position position="18"/>
    </location>
    <ligand>
        <name>Zn(2+)</name>
        <dbReference type="ChEBI" id="CHEBI:29105"/>
    </ligand>
</feature>
<feature type="binding site" evidence="2 4">
    <location>
        <position position="37"/>
    </location>
    <ligand>
        <name>Zn(2+)</name>
        <dbReference type="ChEBI" id="CHEBI:29105"/>
    </ligand>
</feature>
<feature type="binding site" evidence="2 4">
    <location>
        <position position="40"/>
    </location>
    <ligand>
        <name>Zn(2+)</name>
        <dbReference type="ChEBI" id="CHEBI:29105"/>
    </ligand>
</feature>
<feature type="binding site" evidence="1 9 10">
    <location>
        <begin position="120"/>
        <end position="127"/>
    </location>
    <ligand>
        <name>ATP</name>
        <dbReference type="ChEBI" id="CHEBI:30616"/>
    </ligand>
</feature>
<feature type="mutagenesis site" description="No ATP hydrolysis." evidence="10">
    <original>E</original>
    <variation>Q</variation>
    <location>
        <position position="185"/>
    </location>
</feature>
<feature type="mutagenesis site" description="No ATP hydrolysis." evidence="10">
    <original>R</original>
    <variation>K</variation>
    <location>
        <position position="370"/>
    </location>
</feature>
<feature type="sequence conflict" description="In Ref. 2; CAA80816." evidence="13" ref="2">
    <original>IGFGATV</original>
    <variation>HWCWRSG</variation>
    <location>
        <begin position="268"/>
        <end position="274"/>
    </location>
</feature>
<feature type="turn" evidence="14">
    <location>
        <begin position="16"/>
        <end position="18"/>
    </location>
</feature>
<feature type="turn" evidence="14">
    <location>
        <begin position="22"/>
        <end position="24"/>
    </location>
</feature>
<feature type="strand" evidence="14">
    <location>
        <begin position="28"/>
        <end position="30"/>
    </location>
</feature>
<feature type="strand" evidence="14">
    <location>
        <begin position="35"/>
        <end position="37"/>
    </location>
</feature>
<feature type="helix" evidence="14">
    <location>
        <begin position="38"/>
        <end position="49"/>
    </location>
</feature>
<feature type="helix" evidence="17">
    <location>
        <begin position="67"/>
        <end position="77"/>
    </location>
</feature>
<feature type="helix" evidence="17">
    <location>
        <begin position="82"/>
        <end position="100"/>
    </location>
</feature>
<feature type="strand" evidence="18">
    <location>
        <begin position="105"/>
        <end position="107"/>
    </location>
</feature>
<feature type="strand" evidence="17">
    <location>
        <begin position="115"/>
        <end position="118"/>
    </location>
</feature>
<feature type="helix" evidence="17">
    <location>
        <begin position="125"/>
        <end position="135"/>
    </location>
</feature>
<feature type="strand" evidence="18">
    <location>
        <begin position="136"/>
        <end position="138"/>
    </location>
</feature>
<feature type="strand" evidence="17">
    <location>
        <begin position="140"/>
        <end position="144"/>
    </location>
</feature>
<feature type="turn" evidence="17">
    <location>
        <begin position="145"/>
        <end position="147"/>
    </location>
</feature>
<feature type="strand" evidence="17">
    <location>
        <begin position="153"/>
        <end position="155"/>
    </location>
</feature>
<feature type="helix" evidence="17">
    <location>
        <begin position="160"/>
        <end position="168"/>
    </location>
</feature>
<feature type="turn" evidence="15">
    <location>
        <begin position="169"/>
        <end position="171"/>
    </location>
</feature>
<feature type="helix" evidence="17">
    <location>
        <begin position="173"/>
        <end position="177"/>
    </location>
</feature>
<feature type="strand" evidence="17">
    <location>
        <begin position="180"/>
        <end position="184"/>
    </location>
</feature>
<feature type="helix" evidence="17">
    <location>
        <begin position="186"/>
        <end position="189"/>
    </location>
</feature>
<feature type="strand" evidence="17">
    <location>
        <begin position="192"/>
        <end position="195"/>
    </location>
</feature>
<feature type="turn" evidence="17">
    <location>
        <begin position="202"/>
        <end position="204"/>
    </location>
</feature>
<feature type="helix" evidence="17">
    <location>
        <begin position="205"/>
        <end position="216"/>
    </location>
</feature>
<feature type="strand" evidence="17">
    <location>
        <begin position="219"/>
        <end position="222"/>
    </location>
</feature>
<feature type="turn" evidence="17">
    <location>
        <begin position="227"/>
        <end position="229"/>
    </location>
</feature>
<feature type="strand" evidence="17">
    <location>
        <begin position="230"/>
        <end position="232"/>
    </location>
</feature>
<feature type="strand" evidence="17">
    <location>
        <begin position="236"/>
        <end position="239"/>
    </location>
</feature>
<feature type="strand" evidence="17">
    <location>
        <begin position="244"/>
        <end position="249"/>
    </location>
</feature>
<feature type="helix" evidence="17">
    <location>
        <begin position="254"/>
        <end position="262"/>
    </location>
</feature>
<feature type="strand" evidence="16">
    <location>
        <begin position="269"/>
        <end position="272"/>
    </location>
</feature>
<feature type="turn" evidence="17">
    <location>
        <begin position="276"/>
        <end position="278"/>
    </location>
</feature>
<feature type="helix" evidence="17">
    <location>
        <begin position="283"/>
        <end position="287"/>
    </location>
</feature>
<feature type="helix" evidence="17">
    <location>
        <begin position="292"/>
        <end position="298"/>
    </location>
</feature>
<feature type="helix" evidence="17">
    <location>
        <begin position="302"/>
        <end position="306"/>
    </location>
</feature>
<feature type="strand" evidence="17">
    <location>
        <begin position="310"/>
        <end position="313"/>
    </location>
</feature>
<feature type="helix" evidence="17">
    <location>
        <begin position="319"/>
        <end position="327"/>
    </location>
</feature>
<feature type="helix" evidence="17">
    <location>
        <begin position="333"/>
        <end position="342"/>
    </location>
</feature>
<feature type="turn" evidence="17">
    <location>
        <begin position="343"/>
        <end position="345"/>
    </location>
</feature>
<feature type="strand" evidence="17">
    <location>
        <begin position="347"/>
        <end position="350"/>
    </location>
</feature>
<feature type="helix" evidence="17">
    <location>
        <begin position="352"/>
        <end position="365"/>
    </location>
</feature>
<feature type="helix" evidence="17">
    <location>
        <begin position="368"/>
        <end position="370"/>
    </location>
</feature>
<feature type="helix" evidence="17">
    <location>
        <begin position="371"/>
        <end position="379"/>
    </location>
</feature>
<feature type="helix" evidence="17">
    <location>
        <begin position="381"/>
        <end position="386"/>
    </location>
</feature>
<feature type="turn" evidence="17">
    <location>
        <begin position="387"/>
        <end position="389"/>
    </location>
</feature>
<feature type="strand" evidence="17">
    <location>
        <begin position="392"/>
        <end position="398"/>
    </location>
</feature>
<feature type="helix" evidence="17">
    <location>
        <begin position="400"/>
        <end position="404"/>
    </location>
</feature>
<feature type="strand" evidence="18">
    <location>
        <begin position="405"/>
        <end position="407"/>
    </location>
</feature>
<feature type="strand" evidence="17">
    <location>
        <begin position="410"/>
        <end position="413"/>
    </location>
</feature>
<comment type="function">
    <text evidence="3 5">ATP-dependent specificity component of the Clp protease. Uses cycles of ATP binding and hydrolysis to unfold proteins and translocate them to the ClpP protease. It directs the protease to specific substrates both with and without the help of adapter proteins such as SspB. Participates in the final steps of RseA-sigma-E degradation, liberating sigma-E to induce the extracytoplasmic-stress response. It may bind to the lambda O substrate protein and present it to the ClpP protease in a form that can be recognized and readily hydrolyzed by ClpP. Can perform chaperone functions in the absence of ClpP.</text>
</comment>
<comment type="cofactor">
    <cofactor>
        <name>Zn(2+)</name>
        <dbReference type="ChEBI" id="CHEBI:29105"/>
    </cofactor>
    <text>Binds 1 Zn(2+) ion per subunit.</text>
</comment>
<comment type="subunit">
    <text evidence="1 4 7 8 9 10">Component of the ClpX-ClpP complex. Forms a hexameric ring that, in the presence of ATP, binds to fourteen ClpP subunits assembled into a disk-like structure with a central cavity, resembling the structure of eukaryotic proteasomes. Interacts with Mu phage DDE-recombinase A; this interaction remodels the viral transpososome for replication.</text>
</comment>
<comment type="interaction">
    <interactant intactId="EBI-547386">
        <id>P0A6H1</id>
    </interactant>
    <interactant intactId="EBI-370625">
        <id>P0A6G7</id>
        <label>clpP</label>
    </interactant>
    <organismsDiffer>false</organismsDiffer>
    <experiments>5</experiments>
</comment>
<comment type="interaction">
    <interactant intactId="EBI-547386">
        <id>P0A6H1</id>
    </interactant>
    <interactant intactId="EBI-547386">
        <id>P0A6H1</id>
        <label>clpX</label>
    </interactant>
    <organismsDiffer>false</organismsDiffer>
    <experiments>9</experiments>
</comment>
<comment type="interaction">
    <interactant intactId="EBI-547386">
        <id>P0A6H1</id>
    </interactant>
    <interactant intactId="EBI-370963">
        <id>P0A9A6</id>
        <label>ftsZ</label>
    </interactant>
    <organismsDiffer>false</organismsDiffer>
    <experiments>2</experiments>
</comment>
<comment type="induction">
    <text evidence="11">By heat shock. Part of the clpP-clpX operon, clpX can be expressed individually from its own promoter.</text>
</comment>
<comment type="disruption phenotype">
    <text evidence="5 6">Delayed and decreased induction of the extracytoplasmic-stress response.</text>
</comment>
<comment type="similarity">
    <text evidence="1">Belongs to the ClpX chaperone family.</text>
</comment>
<protein>
    <recommendedName>
        <fullName evidence="1">ATP-dependent Clp protease ATP-binding subunit ClpX</fullName>
    </recommendedName>
    <alternativeName>
        <fullName>ATP-dependent unfoldase ClpX</fullName>
    </alternativeName>
</protein>
<accession>P0A6H1</accession>
<accession>P33138</accession>
<accession>Q2MBY8</accession>
<keyword id="KW-0002">3D-structure</keyword>
<keyword id="KW-0067">ATP-binding</keyword>
<keyword id="KW-0143">Chaperone</keyword>
<keyword id="KW-0903">Direct protein sequencing</keyword>
<keyword id="KW-0945">Host-virus interaction</keyword>
<keyword id="KW-0479">Metal-binding</keyword>
<keyword id="KW-0547">Nucleotide-binding</keyword>
<keyword id="KW-1185">Reference proteome</keyword>
<keyword id="KW-0346">Stress response</keyword>
<keyword id="KW-0862">Zinc</keyword>
<gene>
    <name evidence="1" type="primary">clpX</name>
    <name type="synonym">lopC</name>
    <name type="ordered locus">b0438</name>
    <name type="ordered locus">JW0428</name>
</gene>
<evidence type="ECO:0000255" key="1">
    <source>
        <dbReference type="HAMAP-Rule" id="MF_00175"/>
    </source>
</evidence>
<evidence type="ECO:0000255" key="2">
    <source>
        <dbReference type="PROSITE-ProRule" id="PRU01250"/>
    </source>
</evidence>
<evidence type="ECO:0000269" key="3">
    <source>
    </source>
</evidence>
<evidence type="ECO:0000269" key="4">
    <source>
    </source>
</evidence>
<evidence type="ECO:0000269" key="5">
    <source>
    </source>
</evidence>
<evidence type="ECO:0000269" key="6">
    <source>
    </source>
</evidence>
<evidence type="ECO:0000269" key="7">
    <source>
    </source>
</evidence>
<evidence type="ECO:0000269" key="8">
    <source>
    </source>
</evidence>
<evidence type="ECO:0000269" key="9">
    <source>
    </source>
</evidence>
<evidence type="ECO:0000269" key="10">
    <source>
    </source>
</evidence>
<evidence type="ECO:0000269" key="11">
    <source>
    </source>
</evidence>
<evidence type="ECO:0000269" key="12">
    <source>
    </source>
</evidence>
<evidence type="ECO:0000305" key="13"/>
<evidence type="ECO:0007829" key="14">
    <source>
        <dbReference type="PDB" id="2DS5"/>
    </source>
</evidence>
<evidence type="ECO:0007829" key="15">
    <source>
        <dbReference type="PDB" id="3HWS"/>
    </source>
</evidence>
<evidence type="ECO:0007829" key="16">
    <source>
        <dbReference type="PDB" id="6WR2"/>
    </source>
</evidence>
<evidence type="ECO:0007829" key="17">
    <source>
        <dbReference type="PDB" id="6WRF"/>
    </source>
</evidence>
<evidence type="ECO:0007829" key="18">
    <source>
        <dbReference type="PDB" id="6WSG"/>
    </source>
</evidence>
<organism>
    <name type="scientific">Escherichia coli (strain K12)</name>
    <dbReference type="NCBI Taxonomy" id="83333"/>
    <lineage>
        <taxon>Bacteria</taxon>
        <taxon>Pseudomonadati</taxon>
        <taxon>Pseudomonadota</taxon>
        <taxon>Gammaproteobacteria</taxon>
        <taxon>Enterobacterales</taxon>
        <taxon>Enterobacteriaceae</taxon>
        <taxon>Escherichia</taxon>
    </lineage>
</organism>